<keyword id="KW-0687">Ribonucleoprotein</keyword>
<keyword id="KW-0689">Ribosomal protein</keyword>
<proteinExistence type="inferred from homology"/>
<name>RL17_CLOPS</name>
<feature type="chain" id="PRO_0000267859" description="Large ribosomal subunit protein bL17">
    <location>
        <begin position="1"/>
        <end position="113"/>
    </location>
</feature>
<comment type="subunit">
    <text evidence="1">Part of the 50S ribosomal subunit. Contacts protein L32.</text>
</comment>
<comment type="similarity">
    <text evidence="1">Belongs to the bacterial ribosomal protein bL17 family.</text>
</comment>
<dbReference type="EMBL" id="CP000312">
    <property type="protein sequence ID" value="ABG87175.1"/>
    <property type="molecule type" value="Genomic_DNA"/>
</dbReference>
<dbReference type="RefSeq" id="WP_003454231.1">
    <property type="nucleotide sequence ID" value="NZ_CAXVKH010000004.1"/>
</dbReference>
<dbReference type="SMR" id="Q0SQH4"/>
<dbReference type="GeneID" id="93001039"/>
<dbReference type="KEGG" id="cpr:CPR_2369"/>
<dbReference type="Proteomes" id="UP000001824">
    <property type="component" value="Chromosome"/>
</dbReference>
<dbReference type="GO" id="GO:0022625">
    <property type="term" value="C:cytosolic large ribosomal subunit"/>
    <property type="evidence" value="ECO:0007669"/>
    <property type="project" value="TreeGrafter"/>
</dbReference>
<dbReference type="GO" id="GO:0003735">
    <property type="term" value="F:structural constituent of ribosome"/>
    <property type="evidence" value="ECO:0007669"/>
    <property type="project" value="InterPro"/>
</dbReference>
<dbReference type="GO" id="GO:0006412">
    <property type="term" value="P:translation"/>
    <property type="evidence" value="ECO:0007669"/>
    <property type="project" value="UniProtKB-UniRule"/>
</dbReference>
<dbReference type="FunFam" id="3.90.1030.10:FF:000002">
    <property type="entry name" value="50S ribosomal protein L17"/>
    <property type="match status" value="1"/>
</dbReference>
<dbReference type="Gene3D" id="3.90.1030.10">
    <property type="entry name" value="Ribosomal protein L17"/>
    <property type="match status" value="1"/>
</dbReference>
<dbReference type="HAMAP" id="MF_01368">
    <property type="entry name" value="Ribosomal_bL17"/>
    <property type="match status" value="1"/>
</dbReference>
<dbReference type="InterPro" id="IPR000456">
    <property type="entry name" value="Ribosomal_bL17"/>
</dbReference>
<dbReference type="InterPro" id="IPR047859">
    <property type="entry name" value="Ribosomal_bL17_CS"/>
</dbReference>
<dbReference type="InterPro" id="IPR036373">
    <property type="entry name" value="Ribosomal_bL17_sf"/>
</dbReference>
<dbReference type="NCBIfam" id="TIGR00059">
    <property type="entry name" value="L17"/>
    <property type="match status" value="1"/>
</dbReference>
<dbReference type="PANTHER" id="PTHR14413:SF16">
    <property type="entry name" value="LARGE RIBOSOMAL SUBUNIT PROTEIN BL17M"/>
    <property type="match status" value="1"/>
</dbReference>
<dbReference type="PANTHER" id="PTHR14413">
    <property type="entry name" value="RIBOSOMAL PROTEIN L17"/>
    <property type="match status" value="1"/>
</dbReference>
<dbReference type="Pfam" id="PF01196">
    <property type="entry name" value="Ribosomal_L17"/>
    <property type="match status" value="1"/>
</dbReference>
<dbReference type="SUPFAM" id="SSF64263">
    <property type="entry name" value="Prokaryotic ribosomal protein L17"/>
    <property type="match status" value="1"/>
</dbReference>
<dbReference type="PROSITE" id="PS01167">
    <property type="entry name" value="RIBOSOMAL_L17"/>
    <property type="match status" value="1"/>
</dbReference>
<gene>
    <name evidence="1" type="primary">rplQ</name>
    <name type="ordered locus">CPR_2369</name>
</gene>
<evidence type="ECO:0000255" key="1">
    <source>
        <dbReference type="HAMAP-Rule" id="MF_01368"/>
    </source>
</evidence>
<evidence type="ECO:0000305" key="2"/>
<reference key="1">
    <citation type="journal article" date="2006" name="Genome Res.">
        <title>Skewed genomic variability in strains of the toxigenic bacterial pathogen, Clostridium perfringens.</title>
        <authorList>
            <person name="Myers G.S.A."/>
            <person name="Rasko D.A."/>
            <person name="Cheung J.K."/>
            <person name="Ravel J."/>
            <person name="Seshadri R."/>
            <person name="DeBoy R.T."/>
            <person name="Ren Q."/>
            <person name="Varga J."/>
            <person name="Awad M.M."/>
            <person name="Brinkac L.M."/>
            <person name="Daugherty S.C."/>
            <person name="Haft D.H."/>
            <person name="Dodson R.J."/>
            <person name="Madupu R."/>
            <person name="Nelson W.C."/>
            <person name="Rosovitz M.J."/>
            <person name="Sullivan S.A."/>
            <person name="Khouri H."/>
            <person name="Dimitrov G.I."/>
            <person name="Watkins K.L."/>
            <person name="Mulligan S."/>
            <person name="Benton J."/>
            <person name="Radune D."/>
            <person name="Fisher D.J."/>
            <person name="Atkins H.S."/>
            <person name="Hiscox T."/>
            <person name="Jost B.H."/>
            <person name="Billington S.J."/>
            <person name="Songer J.G."/>
            <person name="McClane B.A."/>
            <person name="Titball R.W."/>
            <person name="Rood J.I."/>
            <person name="Melville S.B."/>
            <person name="Paulsen I.T."/>
        </authorList>
    </citation>
    <scope>NUCLEOTIDE SEQUENCE [LARGE SCALE GENOMIC DNA]</scope>
    <source>
        <strain>SM101 / Type A</strain>
    </source>
</reference>
<accession>Q0SQH4</accession>
<organism>
    <name type="scientific">Clostridium perfringens (strain SM101 / Type A)</name>
    <dbReference type="NCBI Taxonomy" id="289380"/>
    <lineage>
        <taxon>Bacteria</taxon>
        <taxon>Bacillati</taxon>
        <taxon>Bacillota</taxon>
        <taxon>Clostridia</taxon>
        <taxon>Eubacteriales</taxon>
        <taxon>Clostridiaceae</taxon>
        <taxon>Clostridium</taxon>
    </lineage>
</organism>
<sequence length="113" mass="12877">MAGYRKLGRPTDQRKAMLRNLVTSFLKHGKIETTETRAKETRSLAEKMITLAKRGDLHARRQVLAFVTEEEVVKNLFDNIAPKYAERNGGYTRMYKVGPRRGDGAEVVILELV</sequence>
<protein>
    <recommendedName>
        <fullName evidence="1">Large ribosomal subunit protein bL17</fullName>
    </recommendedName>
    <alternativeName>
        <fullName evidence="2">50S ribosomal protein L17</fullName>
    </alternativeName>
</protein>